<accession>Q2GHY2</accession>
<evidence type="ECO:0000255" key="1">
    <source>
        <dbReference type="HAMAP-Rule" id="MF_00344"/>
    </source>
</evidence>
<reference key="1">
    <citation type="journal article" date="2006" name="PLoS Genet.">
        <title>Comparative genomics of emerging human ehrlichiosis agents.</title>
        <authorList>
            <person name="Dunning Hotopp J.C."/>
            <person name="Lin M."/>
            <person name="Madupu R."/>
            <person name="Crabtree J."/>
            <person name="Angiuoli S.V."/>
            <person name="Eisen J.A."/>
            <person name="Seshadri R."/>
            <person name="Ren Q."/>
            <person name="Wu M."/>
            <person name="Utterback T.R."/>
            <person name="Smith S."/>
            <person name="Lewis M."/>
            <person name="Khouri H."/>
            <person name="Zhang C."/>
            <person name="Niu H."/>
            <person name="Lin Q."/>
            <person name="Ohashi N."/>
            <person name="Zhi N."/>
            <person name="Nelson W.C."/>
            <person name="Brinkac L.M."/>
            <person name="Dodson R.J."/>
            <person name="Rosovitz M.J."/>
            <person name="Sundaram J.P."/>
            <person name="Daugherty S.C."/>
            <person name="Davidsen T."/>
            <person name="Durkin A.S."/>
            <person name="Gwinn M.L."/>
            <person name="Haft D.H."/>
            <person name="Selengut J.D."/>
            <person name="Sullivan S.A."/>
            <person name="Zafar N."/>
            <person name="Zhou L."/>
            <person name="Benahmed F."/>
            <person name="Forberger H."/>
            <person name="Halpin R."/>
            <person name="Mulligan S."/>
            <person name="Robinson J."/>
            <person name="White O."/>
            <person name="Rikihisa Y."/>
            <person name="Tettelin H."/>
        </authorList>
    </citation>
    <scope>NUCLEOTIDE SEQUENCE [LARGE SCALE GENOMIC DNA]</scope>
    <source>
        <strain>ATCC CRL-10679 / Arkansas</strain>
    </source>
</reference>
<dbReference type="EC" id="6.3.5.2" evidence="1"/>
<dbReference type="EMBL" id="CP000236">
    <property type="protein sequence ID" value="ABD45456.1"/>
    <property type="molecule type" value="Genomic_DNA"/>
</dbReference>
<dbReference type="RefSeq" id="WP_006010944.1">
    <property type="nucleotide sequence ID" value="NC_007799.1"/>
</dbReference>
<dbReference type="SMR" id="Q2GHY2"/>
<dbReference type="STRING" id="205920.ECH_0123"/>
<dbReference type="MEROPS" id="C26.A07"/>
<dbReference type="KEGG" id="ech:ECH_0123"/>
<dbReference type="eggNOG" id="COG0518">
    <property type="taxonomic scope" value="Bacteria"/>
</dbReference>
<dbReference type="eggNOG" id="COG0519">
    <property type="taxonomic scope" value="Bacteria"/>
</dbReference>
<dbReference type="HOGENOM" id="CLU_014340_0_5_5"/>
<dbReference type="OrthoDB" id="9802219at2"/>
<dbReference type="UniPathway" id="UPA00189">
    <property type="reaction ID" value="UER00296"/>
</dbReference>
<dbReference type="Proteomes" id="UP000008320">
    <property type="component" value="Chromosome"/>
</dbReference>
<dbReference type="GO" id="GO:0005829">
    <property type="term" value="C:cytosol"/>
    <property type="evidence" value="ECO:0007669"/>
    <property type="project" value="TreeGrafter"/>
</dbReference>
<dbReference type="GO" id="GO:0005524">
    <property type="term" value="F:ATP binding"/>
    <property type="evidence" value="ECO:0007669"/>
    <property type="project" value="UniProtKB-UniRule"/>
</dbReference>
<dbReference type="GO" id="GO:0003921">
    <property type="term" value="F:GMP synthase activity"/>
    <property type="evidence" value="ECO:0007669"/>
    <property type="project" value="InterPro"/>
</dbReference>
<dbReference type="CDD" id="cd01742">
    <property type="entry name" value="GATase1_GMP_Synthase"/>
    <property type="match status" value="1"/>
</dbReference>
<dbReference type="CDD" id="cd01997">
    <property type="entry name" value="GMP_synthase_C"/>
    <property type="match status" value="1"/>
</dbReference>
<dbReference type="FunFam" id="3.30.300.10:FF:000002">
    <property type="entry name" value="GMP synthase [glutamine-hydrolyzing]"/>
    <property type="match status" value="1"/>
</dbReference>
<dbReference type="FunFam" id="3.40.50.620:FF:000001">
    <property type="entry name" value="GMP synthase [glutamine-hydrolyzing]"/>
    <property type="match status" value="1"/>
</dbReference>
<dbReference type="Gene3D" id="3.30.300.10">
    <property type="match status" value="1"/>
</dbReference>
<dbReference type="Gene3D" id="3.40.50.880">
    <property type="match status" value="1"/>
</dbReference>
<dbReference type="Gene3D" id="3.40.50.620">
    <property type="entry name" value="HUPs"/>
    <property type="match status" value="1"/>
</dbReference>
<dbReference type="HAMAP" id="MF_00344">
    <property type="entry name" value="GMP_synthase"/>
    <property type="match status" value="1"/>
</dbReference>
<dbReference type="InterPro" id="IPR029062">
    <property type="entry name" value="Class_I_gatase-like"/>
</dbReference>
<dbReference type="InterPro" id="IPR017926">
    <property type="entry name" value="GATASE"/>
</dbReference>
<dbReference type="InterPro" id="IPR001674">
    <property type="entry name" value="GMP_synth_C"/>
</dbReference>
<dbReference type="InterPro" id="IPR004739">
    <property type="entry name" value="GMP_synth_GATase"/>
</dbReference>
<dbReference type="InterPro" id="IPR022955">
    <property type="entry name" value="GMP_synthase"/>
</dbReference>
<dbReference type="InterPro" id="IPR025777">
    <property type="entry name" value="GMPS_ATP_PPase_dom"/>
</dbReference>
<dbReference type="InterPro" id="IPR022310">
    <property type="entry name" value="NAD/GMP_synthase"/>
</dbReference>
<dbReference type="InterPro" id="IPR014729">
    <property type="entry name" value="Rossmann-like_a/b/a_fold"/>
</dbReference>
<dbReference type="NCBIfam" id="TIGR00884">
    <property type="entry name" value="guaA_Cterm"/>
    <property type="match status" value="1"/>
</dbReference>
<dbReference type="NCBIfam" id="TIGR00888">
    <property type="entry name" value="guaA_Nterm"/>
    <property type="match status" value="1"/>
</dbReference>
<dbReference type="NCBIfam" id="NF000848">
    <property type="entry name" value="PRK00074.1"/>
    <property type="match status" value="1"/>
</dbReference>
<dbReference type="PANTHER" id="PTHR11922:SF2">
    <property type="entry name" value="GMP SYNTHASE [GLUTAMINE-HYDROLYZING]"/>
    <property type="match status" value="1"/>
</dbReference>
<dbReference type="PANTHER" id="PTHR11922">
    <property type="entry name" value="GMP SYNTHASE-RELATED"/>
    <property type="match status" value="1"/>
</dbReference>
<dbReference type="Pfam" id="PF00117">
    <property type="entry name" value="GATase"/>
    <property type="match status" value="1"/>
</dbReference>
<dbReference type="Pfam" id="PF00958">
    <property type="entry name" value="GMP_synt_C"/>
    <property type="match status" value="1"/>
</dbReference>
<dbReference type="Pfam" id="PF02540">
    <property type="entry name" value="NAD_synthase"/>
    <property type="match status" value="1"/>
</dbReference>
<dbReference type="PRINTS" id="PR00097">
    <property type="entry name" value="ANTSNTHASEII"/>
</dbReference>
<dbReference type="PRINTS" id="PR00096">
    <property type="entry name" value="GATASE"/>
</dbReference>
<dbReference type="SUPFAM" id="SSF52402">
    <property type="entry name" value="Adenine nucleotide alpha hydrolases-like"/>
    <property type="match status" value="1"/>
</dbReference>
<dbReference type="SUPFAM" id="SSF52317">
    <property type="entry name" value="Class I glutamine amidotransferase-like"/>
    <property type="match status" value="1"/>
</dbReference>
<dbReference type="SUPFAM" id="SSF54810">
    <property type="entry name" value="GMP synthetase C-terminal dimerisation domain"/>
    <property type="match status" value="1"/>
</dbReference>
<dbReference type="PROSITE" id="PS51273">
    <property type="entry name" value="GATASE_TYPE_1"/>
    <property type="match status" value="1"/>
</dbReference>
<dbReference type="PROSITE" id="PS51553">
    <property type="entry name" value="GMPS_ATP_PPASE"/>
    <property type="match status" value="1"/>
</dbReference>
<sequence>MSRVAIIDFGSQFTQLLARRIRELNVYSEIFPHDIAFDYIKDSKAFILSGGPKSVLDFTGMPPIVHDIIELNKKTSVPVLGVCYGLQLLSNYFNSTIVHGCGQEFGKAILNVVKKSEMIKDVWKVGDQPYVWMSHADSVYDTPCGFEVIACSVVNNAIAMISNEERRIYGVQFHPEVYHTPDGVKLLANFVRIAGCDNNWTVESFLDEQENLIKKQVGDKKVIAALSGGVDSSVAAALTYRAIGDQLHCIFIDNGLLRYNEAEKVRQSFVDQFQMPVTIVDRSSVFLDKLQFVTDPEQKRKIIGKTFIEVFEEEANKIGNVEFLMQGTIYPDVIESGGSVGKESVTIKSHHNVGGLPDIMKLQLVEPLKLLFKDEVRLLGKKLGISDEILMRHPFPGPGLAIRIIGEITQEKVNMLQAADEIYINLIKKYNLYDVIWQAFAVLLPVKTVGVMGDSRTYGYTCALRAVTSSDGMTAECFPFGVDLETKIIFYEFLQDVSNTIVNNVQGINRVVYDTTSKPPATIEWE</sequence>
<feature type="chain" id="PRO_1000120292" description="GMP synthase [glutamine-hydrolyzing]">
    <location>
        <begin position="1"/>
        <end position="526"/>
    </location>
</feature>
<feature type="domain" description="Glutamine amidotransferase type-1" evidence="1">
    <location>
        <begin position="3"/>
        <end position="199"/>
    </location>
</feature>
<feature type="domain" description="GMPS ATP-PPase" evidence="1">
    <location>
        <begin position="200"/>
        <end position="392"/>
    </location>
</feature>
<feature type="active site" description="Nucleophile" evidence="1">
    <location>
        <position position="83"/>
    </location>
</feature>
<feature type="active site" evidence="1">
    <location>
        <position position="174"/>
    </location>
</feature>
<feature type="active site" evidence="1">
    <location>
        <position position="176"/>
    </location>
</feature>
<feature type="binding site" evidence="1">
    <location>
        <begin position="227"/>
        <end position="233"/>
    </location>
    <ligand>
        <name>ATP</name>
        <dbReference type="ChEBI" id="CHEBI:30616"/>
    </ligand>
</feature>
<proteinExistence type="inferred from homology"/>
<organism>
    <name type="scientific">Ehrlichia chaffeensis (strain ATCC CRL-10679 / Arkansas)</name>
    <dbReference type="NCBI Taxonomy" id="205920"/>
    <lineage>
        <taxon>Bacteria</taxon>
        <taxon>Pseudomonadati</taxon>
        <taxon>Pseudomonadota</taxon>
        <taxon>Alphaproteobacteria</taxon>
        <taxon>Rickettsiales</taxon>
        <taxon>Anaplasmataceae</taxon>
        <taxon>Ehrlichia</taxon>
    </lineage>
</organism>
<gene>
    <name evidence="1" type="primary">guaA</name>
    <name type="ordered locus">ECH_0123</name>
</gene>
<protein>
    <recommendedName>
        <fullName evidence="1">GMP synthase [glutamine-hydrolyzing]</fullName>
        <ecNumber evidence="1">6.3.5.2</ecNumber>
    </recommendedName>
    <alternativeName>
        <fullName evidence="1">GMP synthetase</fullName>
    </alternativeName>
    <alternativeName>
        <fullName evidence="1">Glutamine amidotransferase</fullName>
    </alternativeName>
</protein>
<name>GUAA_EHRCR</name>
<keyword id="KW-0067">ATP-binding</keyword>
<keyword id="KW-0315">Glutamine amidotransferase</keyword>
<keyword id="KW-0332">GMP biosynthesis</keyword>
<keyword id="KW-0436">Ligase</keyword>
<keyword id="KW-0547">Nucleotide-binding</keyword>
<keyword id="KW-0658">Purine biosynthesis</keyword>
<keyword id="KW-1185">Reference proteome</keyword>
<comment type="function">
    <text evidence="1">Catalyzes the synthesis of GMP from XMP.</text>
</comment>
<comment type="catalytic activity">
    <reaction evidence="1">
        <text>XMP + L-glutamine + ATP + H2O = GMP + L-glutamate + AMP + diphosphate + 2 H(+)</text>
        <dbReference type="Rhea" id="RHEA:11680"/>
        <dbReference type="ChEBI" id="CHEBI:15377"/>
        <dbReference type="ChEBI" id="CHEBI:15378"/>
        <dbReference type="ChEBI" id="CHEBI:29985"/>
        <dbReference type="ChEBI" id="CHEBI:30616"/>
        <dbReference type="ChEBI" id="CHEBI:33019"/>
        <dbReference type="ChEBI" id="CHEBI:57464"/>
        <dbReference type="ChEBI" id="CHEBI:58115"/>
        <dbReference type="ChEBI" id="CHEBI:58359"/>
        <dbReference type="ChEBI" id="CHEBI:456215"/>
        <dbReference type="EC" id="6.3.5.2"/>
    </reaction>
</comment>
<comment type="pathway">
    <text evidence="1">Purine metabolism; GMP biosynthesis; GMP from XMP (L-Gln route): step 1/1.</text>
</comment>
<comment type="subunit">
    <text evidence="1">Homodimer.</text>
</comment>